<comment type="function">
    <text evidence="1">Modulates transcription in response to changes in cellular NADH/NAD(+) redox state.</text>
</comment>
<comment type="subunit">
    <text evidence="1">Homodimer.</text>
</comment>
<comment type="subcellular location">
    <subcellularLocation>
        <location evidence="1">Cytoplasm</location>
    </subcellularLocation>
</comment>
<comment type="similarity">
    <text evidence="1">Belongs to the transcriptional regulatory Rex family.</text>
</comment>
<evidence type="ECO:0000255" key="1">
    <source>
        <dbReference type="HAMAP-Rule" id="MF_01131"/>
    </source>
</evidence>
<sequence>MKTIANESSLLDTKVPEPTLRRLPWYLSYVQLLHADGCESVSSTRIARAVGVDASLVAKDLSYVSVDGRTRVGYRVADMVAVLNDFLGFTHHHRAFLFGVGSLGAALLQDSGLRHFGLEIAAGFDVNPDIVDTNINGIPVYHKSRVAELCARERVDIGILTVPIRAAQSMADEMIAAGIKAIWNFTPWRISVPEGVVVQNTSMYAQLAVMFNRMKSLP</sequence>
<keyword id="KW-0963">Cytoplasm</keyword>
<keyword id="KW-0238">DNA-binding</keyword>
<keyword id="KW-0520">NAD</keyword>
<keyword id="KW-0678">Repressor</keyword>
<keyword id="KW-0804">Transcription</keyword>
<keyword id="KW-0805">Transcription regulation</keyword>
<name>REX_PORG3</name>
<proteinExistence type="inferred from homology"/>
<organism>
    <name type="scientific">Porphyromonas gingivalis (strain ATCC 33277 / DSM 20709 / CIP 103683 / JCM 12257 / NCTC 11834 / 2561)</name>
    <dbReference type="NCBI Taxonomy" id="431947"/>
    <lineage>
        <taxon>Bacteria</taxon>
        <taxon>Pseudomonadati</taxon>
        <taxon>Bacteroidota</taxon>
        <taxon>Bacteroidia</taxon>
        <taxon>Bacteroidales</taxon>
        <taxon>Porphyromonadaceae</taxon>
        <taxon>Porphyromonas</taxon>
    </lineage>
</organism>
<feature type="chain" id="PRO_1000137331" description="Redox-sensing transcriptional repressor Rex">
    <location>
        <begin position="1"/>
        <end position="218"/>
    </location>
</feature>
<feature type="DNA-binding region" description="H-T-H motif" evidence="1">
    <location>
        <begin position="25"/>
        <end position="64"/>
    </location>
</feature>
<feature type="binding site" evidence="1">
    <location>
        <begin position="99"/>
        <end position="104"/>
    </location>
    <ligand>
        <name>NAD(+)</name>
        <dbReference type="ChEBI" id="CHEBI:57540"/>
    </ligand>
</feature>
<gene>
    <name evidence="1" type="primary">rex</name>
    <name type="ordered locus">PGN_0020</name>
</gene>
<protein>
    <recommendedName>
        <fullName evidence="1">Redox-sensing transcriptional repressor Rex</fullName>
    </recommendedName>
</protein>
<dbReference type="EMBL" id="AP009380">
    <property type="protein sequence ID" value="BAG32539.1"/>
    <property type="molecule type" value="Genomic_DNA"/>
</dbReference>
<dbReference type="RefSeq" id="WP_012457175.1">
    <property type="nucleotide sequence ID" value="NZ_CP025930.1"/>
</dbReference>
<dbReference type="SMR" id="B2RGP4"/>
<dbReference type="GeneID" id="29255279"/>
<dbReference type="KEGG" id="pgn:PGN_0020"/>
<dbReference type="eggNOG" id="COG2344">
    <property type="taxonomic scope" value="Bacteria"/>
</dbReference>
<dbReference type="HOGENOM" id="CLU_061534_1_1_10"/>
<dbReference type="OrthoDB" id="9784760at2"/>
<dbReference type="BioCyc" id="PGIN431947:G1G2V-19-MONOMER"/>
<dbReference type="Proteomes" id="UP000008842">
    <property type="component" value="Chromosome"/>
</dbReference>
<dbReference type="GO" id="GO:0005737">
    <property type="term" value="C:cytoplasm"/>
    <property type="evidence" value="ECO:0007669"/>
    <property type="project" value="UniProtKB-SubCell"/>
</dbReference>
<dbReference type="GO" id="GO:0003677">
    <property type="term" value="F:DNA binding"/>
    <property type="evidence" value="ECO:0007669"/>
    <property type="project" value="UniProtKB-UniRule"/>
</dbReference>
<dbReference type="GO" id="GO:0003700">
    <property type="term" value="F:DNA-binding transcription factor activity"/>
    <property type="evidence" value="ECO:0007669"/>
    <property type="project" value="UniProtKB-UniRule"/>
</dbReference>
<dbReference type="GO" id="GO:0045892">
    <property type="term" value="P:negative regulation of DNA-templated transcription"/>
    <property type="evidence" value="ECO:0007669"/>
    <property type="project" value="InterPro"/>
</dbReference>
<dbReference type="GO" id="GO:0051775">
    <property type="term" value="P:response to redox state"/>
    <property type="evidence" value="ECO:0007669"/>
    <property type="project" value="InterPro"/>
</dbReference>
<dbReference type="Gene3D" id="3.40.50.720">
    <property type="entry name" value="NAD(P)-binding Rossmann-like Domain"/>
    <property type="match status" value="1"/>
</dbReference>
<dbReference type="Gene3D" id="1.10.10.10">
    <property type="entry name" value="Winged helix-like DNA-binding domain superfamily/Winged helix DNA-binding domain"/>
    <property type="match status" value="1"/>
</dbReference>
<dbReference type="HAMAP" id="MF_01131">
    <property type="entry name" value="Rex"/>
    <property type="match status" value="1"/>
</dbReference>
<dbReference type="InterPro" id="IPR003781">
    <property type="entry name" value="CoA-bd"/>
</dbReference>
<dbReference type="InterPro" id="IPR036291">
    <property type="entry name" value="NAD(P)-bd_dom_sf"/>
</dbReference>
<dbReference type="InterPro" id="IPR009718">
    <property type="entry name" value="Rex_DNA-bd_C_dom"/>
</dbReference>
<dbReference type="InterPro" id="IPR022876">
    <property type="entry name" value="Tscrpt_rep_Rex"/>
</dbReference>
<dbReference type="InterPro" id="IPR036388">
    <property type="entry name" value="WH-like_DNA-bd_sf"/>
</dbReference>
<dbReference type="InterPro" id="IPR036390">
    <property type="entry name" value="WH_DNA-bd_sf"/>
</dbReference>
<dbReference type="NCBIfam" id="NF003994">
    <property type="entry name" value="PRK05472.2-3"/>
    <property type="match status" value="1"/>
</dbReference>
<dbReference type="NCBIfam" id="NF003995">
    <property type="entry name" value="PRK05472.2-4"/>
    <property type="match status" value="1"/>
</dbReference>
<dbReference type="NCBIfam" id="NF003996">
    <property type="entry name" value="PRK05472.2-5"/>
    <property type="match status" value="1"/>
</dbReference>
<dbReference type="PANTHER" id="PTHR35786">
    <property type="entry name" value="REDOX-SENSING TRANSCRIPTIONAL REPRESSOR REX"/>
    <property type="match status" value="1"/>
</dbReference>
<dbReference type="PANTHER" id="PTHR35786:SF1">
    <property type="entry name" value="REDOX-SENSING TRANSCRIPTIONAL REPRESSOR REX 1"/>
    <property type="match status" value="1"/>
</dbReference>
<dbReference type="Pfam" id="PF02629">
    <property type="entry name" value="CoA_binding"/>
    <property type="match status" value="1"/>
</dbReference>
<dbReference type="Pfam" id="PF06971">
    <property type="entry name" value="Put_DNA-bind_N"/>
    <property type="match status" value="1"/>
</dbReference>
<dbReference type="SMART" id="SM00881">
    <property type="entry name" value="CoA_binding"/>
    <property type="match status" value="1"/>
</dbReference>
<dbReference type="SUPFAM" id="SSF51735">
    <property type="entry name" value="NAD(P)-binding Rossmann-fold domains"/>
    <property type="match status" value="1"/>
</dbReference>
<dbReference type="SUPFAM" id="SSF46785">
    <property type="entry name" value="Winged helix' DNA-binding domain"/>
    <property type="match status" value="1"/>
</dbReference>
<reference key="1">
    <citation type="journal article" date="2008" name="DNA Res.">
        <title>Determination of the genome sequence of Porphyromonas gingivalis strain ATCC 33277 and genomic comparison with strain W83 revealed extensive genome rearrangements in P. gingivalis.</title>
        <authorList>
            <person name="Naito M."/>
            <person name="Hirakawa H."/>
            <person name="Yamashita A."/>
            <person name="Ohara N."/>
            <person name="Shoji M."/>
            <person name="Yukitake H."/>
            <person name="Nakayama K."/>
            <person name="Toh H."/>
            <person name="Yoshimura F."/>
            <person name="Kuhara S."/>
            <person name="Hattori M."/>
            <person name="Hayashi T."/>
            <person name="Nakayama K."/>
        </authorList>
    </citation>
    <scope>NUCLEOTIDE SEQUENCE [LARGE SCALE GENOMIC DNA]</scope>
    <source>
        <strain>ATCC 33277 / DSM 20709 / CIP 103683 / JCM 12257 / NCTC 11834 / 2561</strain>
    </source>
</reference>
<accession>B2RGP4</accession>